<gene>
    <name evidence="1" type="primary">atpH</name>
</gene>
<evidence type="ECO:0000255" key="1">
    <source>
        <dbReference type="HAMAP-Rule" id="MF_01396"/>
    </source>
</evidence>
<proteinExistence type="inferred from homology"/>
<geneLocation type="chloroplast"/>
<feature type="chain" id="PRO_0000362952" description="ATP synthase subunit c, chloroplastic">
    <location>
        <begin position="1"/>
        <end position="81"/>
    </location>
</feature>
<feature type="transmembrane region" description="Helical" evidence="1">
    <location>
        <begin position="3"/>
        <end position="23"/>
    </location>
</feature>
<feature type="transmembrane region" description="Helical" evidence="1">
    <location>
        <begin position="57"/>
        <end position="77"/>
    </location>
</feature>
<feature type="site" description="Reversibly protonated during proton transport" evidence="1">
    <location>
        <position position="61"/>
    </location>
</feature>
<comment type="function">
    <text evidence="1">F(1)F(0) ATP synthase produces ATP from ADP in the presence of a proton or sodium gradient. F-type ATPases consist of two structural domains, F(1) containing the extramembraneous catalytic core and F(0) containing the membrane proton channel, linked together by a central stalk and a peripheral stalk. During catalysis, ATP synthesis in the catalytic domain of F(1) is coupled via a rotary mechanism of the central stalk subunits to proton translocation.</text>
</comment>
<comment type="function">
    <text evidence="1">Key component of the F(0) channel; it plays a direct role in translocation across the membrane. A homomeric c-ring of between 10-14 subunits forms the central stalk rotor element with the F(1) delta and epsilon subunits.</text>
</comment>
<comment type="subunit">
    <text evidence="1">F-type ATPases have 2 components, F(1) - the catalytic core - and F(0) - the membrane proton channel. F(1) has five subunits: alpha(3), beta(3), gamma(1), delta(1), epsilon(1). F(0) has four main subunits: a(1), b(1), b'(1) and c(10-14). The alpha and beta chains form an alternating ring which encloses part of the gamma chain. F(1) is attached to F(0) by a central stalk formed by the gamma and epsilon chains, while a peripheral stalk is formed by the delta, b and b' chains.</text>
</comment>
<comment type="subcellular location">
    <subcellularLocation>
        <location evidence="1">Plastid</location>
        <location evidence="1">Chloroplast thylakoid membrane</location>
        <topology evidence="1">Multi-pass membrane protein</topology>
    </subcellularLocation>
</comment>
<comment type="miscellaneous">
    <text>In plastids the F-type ATPase is also known as CF(1)CF(0).</text>
</comment>
<comment type="similarity">
    <text evidence="1">Belongs to the ATPase C chain family.</text>
</comment>
<protein>
    <recommendedName>
        <fullName evidence="1">ATP synthase subunit c, chloroplastic</fullName>
    </recommendedName>
    <alternativeName>
        <fullName evidence="1">ATP synthase F(0) sector subunit c</fullName>
    </alternativeName>
    <alternativeName>
        <fullName evidence="1">ATPase subunit III</fullName>
    </alternativeName>
    <alternativeName>
        <fullName evidence="1">F-type ATPase subunit c</fullName>
        <shortName evidence="1">F-ATPase subunit c</shortName>
    </alternativeName>
    <alternativeName>
        <fullName evidence="1">Lipid-binding protein</fullName>
    </alternativeName>
</protein>
<organism>
    <name type="scientific">Phalaenopsis aphrodite subsp. formosana</name>
    <name type="common">Moth orchid</name>
    <dbReference type="NCBI Taxonomy" id="308872"/>
    <lineage>
        <taxon>Eukaryota</taxon>
        <taxon>Viridiplantae</taxon>
        <taxon>Streptophyta</taxon>
        <taxon>Embryophyta</taxon>
        <taxon>Tracheophyta</taxon>
        <taxon>Spermatophyta</taxon>
        <taxon>Magnoliopsida</taxon>
        <taxon>Liliopsida</taxon>
        <taxon>Asparagales</taxon>
        <taxon>Orchidaceae</taxon>
        <taxon>Epidendroideae</taxon>
        <taxon>Vandeae</taxon>
        <taxon>Aeridinae</taxon>
        <taxon>Phalaenopsis</taxon>
    </lineage>
</organism>
<sequence>MNPLISAASVIAAGLAVGLASIGPGVGQGTAAGQAVEGIARQPEAEGKIRGTLLLSLAFMEALTIYGLVVALALLFANPFV</sequence>
<accession>Q3BAQ5</accession>
<reference key="1">
    <citation type="journal article" date="2006" name="Mol. Biol. Evol.">
        <title>The chloroplast genome of Phalaenopsis aphrodite (Orchidaceae): comparative analysis of evolutionary rate with that of grasses and its phylogenetic implications.</title>
        <authorList>
            <person name="Chang C.-C."/>
            <person name="Lin H.-C."/>
            <person name="Lin I.-P."/>
            <person name="Chow T.-Y."/>
            <person name="Chen H.-H."/>
            <person name="Chen W.-H."/>
            <person name="Cheng C.-H."/>
            <person name="Lin C.-Y."/>
            <person name="Liu S.-M."/>
            <person name="Chang C.-C."/>
            <person name="Chaw S.-M."/>
        </authorList>
    </citation>
    <scope>NUCLEOTIDE SEQUENCE [LARGE SCALE GENOMIC DNA]</scope>
    <source>
        <strain>cv. Taisugar TS-97</strain>
    </source>
</reference>
<name>ATPH_PHAAO</name>
<dbReference type="EMBL" id="AY916449">
    <property type="protein sequence ID" value="AAW82490.1"/>
    <property type="molecule type" value="Genomic_DNA"/>
</dbReference>
<dbReference type="RefSeq" id="YP_358563.1">
    <property type="nucleotide sequence ID" value="NC_007499.1"/>
</dbReference>
<dbReference type="SMR" id="Q3BAQ5"/>
<dbReference type="GeneID" id="3741665"/>
<dbReference type="GO" id="GO:0009535">
    <property type="term" value="C:chloroplast thylakoid membrane"/>
    <property type="evidence" value="ECO:0007669"/>
    <property type="project" value="UniProtKB-SubCell"/>
</dbReference>
<dbReference type="GO" id="GO:0045259">
    <property type="term" value="C:proton-transporting ATP synthase complex"/>
    <property type="evidence" value="ECO:0007669"/>
    <property type="project" value="UniProtKB-KW"/>
</dbReference>
<dbReference type="GO" id="GO:0033177">
    <property type="term" value="C:proton-transporting two-sector ATPase complex, proton-transporting domain"/>
    <property type="evidence" value="ECO:0007669"/>
    <property type="project" value="InterPro"/>
</dbReference>
<dbReference type="GO" id="GO:0008289">
    <property type="term" value="F:lipid binding"/>
    <property type="evidence" value="ECO:0007669"/>
    <property type="project" value="UniProtKB-KW"/>
</dbReference>
<dbReference type="GO" id="GO:0046933">
    <property type="term" value="F:proton-transporting ATP synthase activity, rotational mechanism"/>
    <property type="evidence" value="ECO:0007669"/>
    <property type="project" value="UniProtKB-UniRule"/>
</dbReference>
<dbReference type="CDD" id="cd18183">
    <property type="entry name" value="ATP-synt_Fo_c_ATPH"/>
    <property type="match status" value="1"/>
</dbReference>
<dbReference type="FunFam" id="1.20.20.10:FF:000001">
    <property type="entry name" value="ATP synthase subunit c, chloroplastic"/>
    <property type="match status" value="1"/>
</dbReference>
<dbReference type="Gene3D" id="1.20.20.10">
    <property type="entry name" value="F1F0 ATP synthase subunit C"/>
    <property type="match status" value="1"/>
</dbReference>
<dbReference type="HAMAP" id="MF_01396">
    <property type="entry name" value="ATP_synth_c_bact"/>
    <property type="match status" value="1"/>
</dbReference>
<dbReference type="InterPro" id="IPR005953">
    <property type="entry name" value="ATP_synth_csu_bac/chlpt"/>
</dbReference>
<dbReference type="InterPro" id="IPR000454">
    <property type="entry name" value="ATP_synth_F0_csu"/>
</dbReference>
<dbReference type="InterPro" id="IPR020537">
    <property type="entry name" value="ATP_synth_F0_csu_DDCD_BS"/>
</dbReference>
<dbReference type="InterPro" id="IPR038662">
    <property type="entry name" value="ATP_synth_F0_csu_sf"/>
</dbReference>
<dbReference type="InterPro" id="IPR002379">
    <property type="entry name" value="ATPase_proteolipid_c-like_dom"/>
</dbReference>
<dbReference type="InterPro" id="IPR035921">
    <property type="entry name" value="F/V-ATP_Csub_sf"/>
</dbReference>
<dbReference type="NCBIfam" id="TIGR01260">
    <property type="entry name" value="ATP_synt_c"/>
    <property type="match status" value="1"/>
</dbReference>
<dbReference type="NCBIfam" id="NF005608">
    <property type="entry name" value="PRK07354.1"/>
    <property type="match status" value="1"/>
</dbReference>
<dbReference type="PANTHER" id="PTHR10031">
    <property type="entry name" value="ATP SYNTHASE LIPID-BINDING PROTEIN, MITOCHONDRIAL"/>
    <property type="match status" value="1"/>
</dbReference>
<dbReference type="PANTHER" id="PTHR10031:SF0">
    <property type="entry name" value="ATPASE PROTEIN 9"/>
    <property type="match status" value="1"/>
</dbReference>
<dbReference type="Pfam" id="PF00137">
    <property type="entry name" value="ATP-synt_C"/>
    <property type="match status" value="1"/>
</dbReference>
<dbReference type="PRINTS" id="PR00124">
    <property type="entry name" value="ATPASEC"/>
</dbReference>
<dbReference type="SUPFAM" id="SSF81333">
    <property type="entry name" value="F1F0 ATP synthase subunit C"/>
    <property type="match status" value="1"/>
</dbReference>
<dbReference type="PROSITE" id="PS00605">
    <property type="entry name" value="ATPASE_C"/>
    <property type="match status" value="1"/>
</dbReference>
<keyword id="KW-0066">ATP synthesis</keyword>
<keyword id="KW-0138">CF(0)</keyword>
<keyword id="KW-0150">Chloroplast</keyword>
<keyword id="KW-0375">Hydrogen ion transport</keyword>
<keyword id="KW-0406">Ion transport</keyword>
<keyword id="KW-0446">Lipid-binding</keyword>
<keyword id="KW-0472">Membrane</keyword>
<keyword id="KW-0934">Plastid</keyword>
<keyword id="KW-0793">Thylakoid</keyword>
<keyword id="KW-0812">Transmembrane</keyword>
<keyword id="KW-1133">Transmembrane helix</keyword>
<keyword id="KW-0813">Transport</keyword>